<proteinExistence type="evidence at protein level"/>
<keyword id="KW-0571">Peptide transport</keyword>
<keyword id="KW-0653">Protein transport</keyword>
<keyword id="KW-0732">Signal</keyword>
<keyword id="KW-0813">Transport</keyword>
<protein>
    <recommendedName>
        <fullName evidence="4">Di/tripeptide-binding protein 1</fullName>
    </recommendedName>
</protein>
<comment type="function">
    <text evidence="2">Part of the ABC transporter DppABCDF involved in the uptake of various di/tripeptides (PubMed:25338022). Prefers dipeptides with acidic residues at the C-terminal end. Involved in the uptake of phaseolotoxin, a toxic tripeptide inhibiting the enzyme ornithine carbamoyltransferase (PubMed:25338022).</text>
</comment>
<comment type="subunit">
    <text evidence="2">The complex is composed of two ATP-binding proteins (DppD and DppF), two transmembrane proteins (DppB and DppC) and a solute-binding protein (DppA1) (PubMed:25338022). Five orthologous SBPs (DppA1-A5) are present in P.aeruginosa, which increases the substrate specificity of the DppBCDF transporter (PubMed:25338022).</text>
</comment>
<comment type="similarity">
    <text evidence="4">Belongs to the bacterial solute-binding protein 5 family.</text>
</comment>
<feature type="signal peptide" evidence="1">
    <location>
        <begin position="1"/>
        <end position="29"/>
    </location>
</feature>
<feature type="chain" id="PRO_0000452188" description="Di/tripeptide-binding protein 1">
    <location>
        <begin position="30"/>
        <end position="537"/>
    </location>
</feature>
<dbReference type="EMBL" id="CP000438">
    <property type="protein sequence ID" value="ABJ13764.1"/>
    <property type="molecule type" value="Genomic_DNA"/>
</dbReference>
<dbReference type="RefSeq" id="WP_003116231.1">
    <property type="nucleotide sequence ID" value="NZ_CP034244.1"/>
</dbReference>
<dbReference type="SMR" id="A0A0H2ZGV2"/>
<dbReference type="KEGG" id="pau:PA14_58350"/>
<dbReference type="HOGENOM" id="CLU_017028_7_0_6"/>
<dbReference type="BioCyc" id="PAER208963:G1G74-4914-MONOMER"/>
<dbReference type="Proteomes" id="UP000000653">
    <property type="component" value="Chromosome"/>
</dbReference>
<dbReference type="GO" id="GO:0043190">
    <property type="term" value="C:ATP-binding cassette (ABC) transporter complex"/>
    <property type="evidence" value="ECO:0007669"/>
    <property type="project" value="InterPro"/>
</dbReference>
<dbReference type="GO" id="GO:0030288">
    <property type="term" value="C:outer membrane-bounded periplasmic space"/>
    <property type="evidence" value="ECO:0007669"/>
    <property type="project" value="TreeGrafter"/>
</dbReference>
<dbReference type="GO" id="GO:1904680">
    <property type="term" value="F:peptide transmembrane transporter activity"/>
    <property type="evidence" value="ECO:0007669"/>
    <property type="project" value="TreeGrafter"/>
</dbReference>
<dbReference type="GO" id="GO:0042938">
    <property type="term" value="P:dipeptide transport"/>
    <property type="evidence" value="ECO:0007669"/>
    <property type="project" value="TreeGrafter"/>
</dbReference>
<dbReference type="GO" id="GO:0015031">
    <property type="term" value="P:protein transport"/>
    <property type="evidence" value="ECO:0007669"/>
    <property type="project" value="UniProtKB-KW"/>
</dbReference>
<dbReference type="CDD" id="cd08493">
    <property type="entry name" value="PBP2_DppA_like"/>
    <property type="match status" value="1"/>
</dbReference>
<dbReference type="FunFam" id="3.10.105.10:FF:000002">
    <property type="entry name" value="Dipeptide ABC transporter, substrate-binding protein"/>
    <property type="match status" value="1"/>
</dbReference>
<dbReference type="FunFam" id="3.40.190.10:FF:000036">
    <property type="entry name" value="Dipeptide ABC transporter, substrate-binding protein"/>
    <property type="match status" value="1"/>
</dbReference>
<dbReference type="FunFam" id="3.90.76.10:FF:000002">
    <property type="entry name" value="Dipeptide ABC transporter, substrate-binding protein"/>
    <property type="match status" value="1"/>
</dbReference>
<dbReference type="Gene3D" id="3.90.76.10">
    <property type="entry name" value="Dipeptide-binding Protein, Domain 1"/>
    <property type="match status" value="1"/>
</dbReference>
<dbReference type="Gene3D" id="3.10.105.10">
    <property type="entry name" value="Dipeptide-binding Protein, Domain 3"/>
    <property type="match status" value="1"/>
</dbReference>
<dbReference type="Gene3D" id="3.40.190.10">
    <property type="entry name" value="Periplasmic binding protein-like II"/>
    <property type="match status" value="1"/>
</dbReference>
<dbReference type="InterPro" id="IPR030678">
    <property type="entry name" value="Peptide/Ni-bd"/>
</dbReference>
<dbReference type="InterPro" id="IPR039424">
    <property type="entry name" value="SBP_5"/>
</dbReference>
<dbReference type="InterPro" id="IPR023765">
    <property type="entry name" value="SBP_5_CS"/>
</dbReference>
<dbReference type="InterPro" id="IPR000914">
    <property type="entry name" value="SBP_5_dom"/>
</dbReference>
<dbReference type="PANTHER" id="PTHR30290:SF38">
    <property type="entry name" value="D,D-DIPEPTIDE-BINDING PERIPLASMIC PROTEIN DDPA-RELATED"/>
    <property type="match status" value="1"/>
</dbReference>
<dbReference type="PANTHER" id="PTHR30290">
    <property type="entry name" value="PERIPLASMIC BINDING COMPONENT OF ABC TRANSPORTER"/>
    <property type="match status" value="1"/>
</dbReference>
<dbReference type="Pfam" id="PF00496">
    <property type="entry name" value="SBP_bac_5"/>
    <property type="match status" value="1"/>
</dbReference>
<dbReference type="PIRSF" id="PIRSF002741">
    <property type="entry name" value="MppA"/>
    <property type="match status" value="1"/>
</dbReference>
<dbReference type="SUPFAM" id="SSF53850">
    <property type="entry name" value="Periplasmic binding protein-like II"/>
    <property type="match status" value="1"/>
</dbReference>
<dbReference type="PROSITE" id="PS01040">
    <property type="entry name" value="SBP_BACTERIAL_5"/>
    <property type="match status" value="1"/>
</dbReference>
<accession>A0A0H2ZGV2</accession>
<gene>
    <name evidence="3" type="primary">dppA1</name>
    <name evidence="5" type="ordered locus">PA14_58350</name>
</gene>
<organism>
    <name type="scientific">Pseudomonas aeruginosa (strain UCBPP-PA14)</name>
    <dbReference type="NCBI Taxonomy" id="208963"/>
    <lineage>
        <taxon>Bacteria</taxon>
        <taxon>Pseudomonadati</taxon>
        <taxon>Pseudomonadota</taxon>
        <taxon>Gammaproteobacteria</taxon>
        <taxon>Pseudomonadales</taxon>
        <taxon>Pseudomonadaceae</taxon>
        <taxon>Pseudomonas</taxon>
    </lineage>
</organism>
<sequence length="537" mass="60109">MRRNAVIRSAIMPSLLGAALVAAVPQAFASNLIFCSEGSPAGFDPAQYTTGTDFDAAAETVFNRLTQFERGGTKVLPGLAESWDVSDDGKTYTFHLRKGVKFHSTDYFKPTREFNADDVLFTFERMLDKDHPFRKAYPTEFPYFTDMGLDKNIARIEKLDEHTVKFTLNEVDAAFIQNLAMPFPSIQSAEYAAQLLKQGKASDINQKPIGTGPFVFSRYQKDAQIRFKGNKDYWKPDEVKVDNLIFAINTDASVRAQKLKAGECQITLNPRPADLDALKKDPNLNLPSQAGFNLGYIAYNVTHKPFDKLEVRQALDMAVNKQAIIDAVYQGAGQLASNGMPPTQWSYDETIKDAPYDPAKARELLKKAGVAEGTEITLWAMPVQRPYNPNAKLMAEMLQNDWAKIGIKAKIVTYEWGEYIKRAKGGEHDAMLIGWSGDNGDPDNWLGTLYGCDAVDGNNFSKWCDAGYDKLVKDAKRTTDQGKRTELYKQAQHILKEQVPITPIAHSTVYQPMRKTVHDFRISPFGLNSFYEVSVGK</sequence>
<name>DPPA1_PSEAB</name>
<evidence type="ECO:0000255" key="1"/>
<evidence type="ECO:0000269" key="2">
    <source>
    </source>
</evidence>
<evidence type="ECO:0000303" key="3">
    <source>
    </source>
</evidence>
<evidence type="ECO:0000305" key="4"/>
<evidence type="ECO:0000312" key="5">
    <source>
        <dbReference type="EMBL" id="ABJ13764.1"/>
    </source>
</evidence>
<reference key="1">
    <citation type="journal article" date="2006" name="Genome Biol.">
        <title>Genomic analysis reveals that Pseudomonas aeruginosa virulence is combinatorial.</title>
        <authorList>
            <person name="Lee D.G."/>
            <person name="Urbach J.M."/>
            <person name="Wu G."/>
            <person name="Liberati N.T."/>
            <person name="Feinbaum R.L."/>
            <person name="Miyata S."/>
            <person name="Diggins L.T."/>
            <person name="He J."/>
            <person name="Saucier M."/>
            <person name="Deziel E."/>
            <person name="Friedman L."/>
            <person name="Li L."/>
            <person name="Grills G."/>
            <person name="Montgomery K."/>
            <person name="Kucherlapati R."/>
            <person name="Rahme L.G."/>
            <person name="Ausubel F.M."/>
        </authorList>
    </citation>
    <scope>NUCLEOTIDE SEQUENCE [LARGE SCALE GENOMIC DNA]</scope>
    <source>
        <strain>UCBPP-PA14</strain>
    </source>
</reference>
<reference key="2">
    <citation type="journal article" date="2014" name="PLoS ONE">
        <title>High-throughput screening of dipeptide utilization mediated by the ABC transporter DppBCDF and its substrate-binding proteins DppA1-A5 in Pseudomonas aeruginosa.</title>
        <authorList>
            <person name="Pletzer D."/>
            <person name="Lafon C."/>
            <person name="Braun Y."/>
            <person name="Koehler T."/>
            <person name="Page M.G."/>
            <person name="Mourez M."/>
            <person name="Weingart H."/>
        </authorList>
    </citation>
    <scope>FUNCTION</scope>
    <scope>SUBUNIT</scope>
    <source>
        <strain>UCBPP-PA14</strain>
    </source>
</reference>